<sequence>MNKFLQSCVNGRTLKTGEAEKLMEMMMNGDMSQSEIGGILSVLAHRGETAEELAGFVKVMRARAQTSGGLADVVDTCGTGGDGISTFNISTAAAITASAAGAKVAKHGNRSVSSKSGSADVLEKLGVSIQATPESVKRSIEMKQMGFLFAPLFHSSMKHVAAARKELGFRTVFNLLGPLSNPLQVKRQVIGVYSFDKARLMASALEQFDVRHVMLVSARDGLDELSITAPTDIIELKNGERLEYSVSPEQFGFAEGSLKDIQVSSSEESALLIQNIFANKAPSSALHITALNAGAAIYTAGLANDLKEGTKTALEAIQNGDAKRQLERLKQKEEEMYA</sequence>
<keyword id="KW-0028">Amino-acid biosynthesis</keyword>
<keyword id="KW-0057">Aromatic amino acid biosynthesis</keyword>
<keyword id="KW-0328">Glycosyltransferase</keyword>
<keyword id="KW-0460">Magnesium</keyword>
<keyword id="KW-0479">Metal-binding</keyword>
<keyword id="KW-0808">Transferase</keyword>
<keyword id="KW-0822">Tryptophan biosynthesis</keyword>
<comment type="function">
    <text evidence="1">Catalyzes the transfer of the phosphoribosyl group of 5-phosphorylribose-1-pyrophosphate (PRPP) to anthranilate to yield N-(5'-phosphoribosyl)-anthranilate (PRA).</text>
</comment>
<comment type="catalytic activity">
    <reaction evidence="1">
        <text>N-(5-phospho-beta-D-ribosyl)anthranilate + diphosphate = 5-phospho-alpha-D-ribose 1-diphosphate + anthranilate</text>
        <dbReference type="Rhea" id="RHEA:11768"/>
        <dbReference type="ChEBI" id="CHEBI:16567"/>
        <dbReference type="ChEBI" id="CHEBI:18277"/>
        <dbReference type="ChEBI" id="CHEBI:33019"/>
        <dbReference type="ChEBI" id="CHEBI:58017"/>
        <dbReference type="EC" id="2.4.2.18"/>
    </reaction>
</comment>
<comment type="cofactor">
    <cofactor evidence="1">
        <name>Mg(2+)</name>
        <dbReference type="ChEBI" id="CHEBI:18420"/>
    </cofactor>
    <text evidence="1">Binds 2 magnesium ions per monomer.</text>
</comment>
<comment type="pathway">
    <text evidence="1">Amino-acid biosynthesis; L-tryptophan biosynthesis; L-tryptophan from chorismate: step 2/5.</text>
</comment>
<comment type="subunit">
    <text evidence="1">Homodimer.</text>
</comment>
<comment type="similarity">
    <text evidence="1">Belongs to the anthranilate phosphoribosyltransferase family.</text>
</comment>
<feature type="chain" id="PRO_1000042991" description="Anthranilate phosphoribosyltransferase">
    <location>
        <begin position="1"/>
        <end position="338"/>
    </location>
</feature>
<feature type="binding site" evidence="1">
    <location>
        <position position="78"/>
    </location>
    <ligand>
        <name>5-phospho-alpha-D-ribose 1-diphosphate</name>
        <dbReference type="ChEBI" id="CHEBI:58017"/>
    </ligand>
</feature>
<feature type="binding site" evidence="1">
    <location>
        <position position="78"/>
    </location>
    <ligand>
        <name>anthranilate</name>
        <dbReference type="ChEBI" id="CHEBI:16567"/>
        <label>1</label>
    </ligand>
</feature>
<feature type="binding site" evidence="1">
    <location>
        <begin position="81"/>
        <end position="82"/>
    </location>
    <ligand>
        <name>5-phospho-alpha-D-ribose 1-diphosphate</name>
        <dbReference type="ChEBI" id="CHEBI:58017"/>
    </ligand>
</feature>
<feature type="binding site" evidence="1">
    <location>
        <position position="86"/>
    </location>
    <ligand>
        <name>5-phospho-alpha-D-ribose 1-diphosphate</name>
        <dbReference type="ChEBI" id="CHEBI:58017"/>
    </ligand>
</feature>
<feature type="binding site" evidence="1">
    <location>
        <begin position="88"/>
        <end position="91"/>
    </location>
    <ligand>
        <name>5-phospho-alpha-D-ribose 1-diphosphate</name>
        <dbReference type="ChEBI" id="CHEBI:58017"/>
    </ligand>
</feature>
<feature type="binding site" evidence="1">
    <location>
        <position position="90"/>
    </location>
    <ligand>
        <name>Mg(2+)</name>
        <dbReference type="ChEBI" id="CHEBI:18420"/>
        <label>1</label>
    </ligand>
</feature>
<feature type="binding site" evidence="1">
    <location>
        <begin position="106"/>
        <end position="114"/>
    </location>
    <ligand>
        <name>5-phospho-alpha-D-ribose 1-diphosphate</name>
        <dbReference type="ChEBI" id="CHEBI:58017"/>
    </ligand>
</feature>
<feature type="binding site" evidence="1">
    <location>
        <position position="109"/>
    </location>
    <ligand>
        <name>anthranilate</name>
        <dbReference type="ChEBI" id="CHEBI:16567"/>
        <label>1</label>
    </ligand>
</feature>
<feature type="binding site" evidence="1">
    <location>
        <position position="118"/>
    </location>
    <ligand>
        <name>5-phospho-alpha-D-ribose 1-diphosphate</name>
        <dbReference type="ChEBI" id="CHEBI:58017"/>
    </ligand>
</feature>
<feature type="binding site" evidence="1">
    <location>
        <position position="164"/>
    </location>
    <ligand>
        <name>anthranilate</name>
        <dbReference type="ChEBI" id="CHEBI:16567"/>
        <label>2</label>
    </ligand>
</feature>
<feature type="binding site" evidence="1">
    <location>
        <position position="223"/>
    </location>
    <ligand>
        <name>Mg(2+)</name>
        <dbReference type="ChEBI" id="CHEBI:18420"/>
        <label>2</label>
    </ligand>
</feature>
<feature type="binding site" evidence="1">
    <location>
        <position position="224"/>
    </location>
    <ligand>
        <name>Mg(2+)</name>
        <dbReference type="ChEBI" id="CHEBI:18420"/>
        <label>1</label>
    </ligand>
</feature>
<feature type="binding site" evidence="1">
    <location>
        <position position="224"/>
    </location>
    <ligand>
        <name>Mg(2+)</name>
        <dbReference type="ChEBI" id="CHEBI:18420"/>
        <label>2</label>
    </ligand>
</feature>
<gene>
    <name evidence="1" type="primary">trpD</name>
    <name type="ordered locus">RBAM_020830</name>
</gene>
<accession>A7Z619</accession>
<dbReference type="EC" id="2.4.2.18" evidence="1"/>
<dbReference type="EMBL" id="CP000560">
    <property type="protein sequence ID" value="ABS74445.1"/>
    <property type="molecule type" value="Genomic_DNA"/>
</dbReference>
<dbReference type="RefSeq" id="WP_012117860.1">
    <property type="nucleotide sequence ID" value="NC_009725.2"/>
</dbReference>
<dbReference type="SMR" id="A7Z619"/>
<dbReference type="GeneID" id="93081218"/>
<dbReference type="KEGG" id="bay:RBAM_020830"/>
<dbReference type="HOGENOM" id="CLU_034315_2_1_9"/>
<dbReference type="UniPathway" id="UPA00035">
    <property type="reaction ID" value="UER00041"/>
</dbReference>
<dbReference type="Proteomes" id="UP000001120">
    <property type="component" value="Chromosome"/>
</dbReference>
<dbReference type="GO" id="GO:0005829">
    <property type="term" value="C:cytosol"/>
    <property type="evidence" value="ECO:0007669"/>
    <property type="project" value="TreeGrafter"/>
</dbReference>
<dbReference type="GO" id="GO:0004048">
    <property type="term" value="F:anthranilate phosphoribosyltransferase activity"/>
    <property type="evidence" value="ECO:0007669"/>
    <property type="project" value="UniProtKB-UniRule"/>
</dbReference>
<dbReference type="GO" id="GO:0000287">
    <property type="term" value="F:magnesium ion binding"/>
    <property type="evidence" value="ECO:0007669"/>
    <property type="project" value="UniProtKB-UniRule"/>
</dbReference>
<dbReference type="GO" id="GO:0000162">
    <property type="term" value="P:L-tryptophan biosynthetic process"/>
    <property type="evidence" value="ECO:0007669"/>
    <property type="project" value="UniProtKB-UniRule"/>
</dbReference>
<dbReference type="FunFam" id="3.40.1030.10:FF:000002">
    <property type="entry name" value="Anthranilate phosphoribosyltransferase"/>
    <property type="match status" value="1"/>
</dbReference>
<dbReference type="Gene3D" id="3.40.1030.10">
    <property type="entry name" value="Nucleoside phosphorylase/phosphoribosyltransferase catalytic domain"/>
    <property type="match status" value="1"/>
</dbReference>
<dbReference type="Gene3D" id="1.20.970.10">
    <property type="entry name" value="Transferase, Pyrimidine Nucleoside Phosphorylase, Chain C"/>
    <property type="match status" value="1"/>
</dbReference>
<dbReference type="HAMAP" id="MF_00211">
    <property type="entry name" value="TrpD"/>
    <property type="match status" value="1"/>
</dbReference>
<dbReference type="InterPro" id="IPR005940">
    <property type="entry name" value="Anthranilate_Pribosyl_Tfrase"/>
</dbReference>
<dbReference type="InterPro" id="IPR000312">
    <property type="entry name" value="Glycosyl_Trfase_fam3"/>
</dbReference>
<dbReference type="InterPro" id="IPR017459">
    <property type="entry name" value="Glycosyl_Trfase_fam3_N_dom"/>
</dbReference>
<dbReference type="InterPro" id="IPR036320">
    <property type="entry name" value="Glycosyl_Trfase_fam3_N_dom_sf"/>
</dbReference>
<dbReference type="InterPro" id="IPR035902">
    <property type="entry name" value="Nuc_phospho_transferase"/>
</dbReference>
<dbReference type="NCBIfam" id="TIGR01245">
    <property type="entry name" value="trpD"/>
    <property type="match status" value="1"/>
</dbReference>
<dbReference type="PANTHER" id="PTHR43285">
    <property type="entry name" value="ANTHRANILATE PHOSPHORIBOSYLTRANSFERASE"/>
    <property type="match status" value="1"/>
</dbReference>
<dbReference type="PANTHER" id="PTHR43285:SF2">
    <property type="entry name" value="ANTHRANILATE PHOSPHORIBOSYLTRANSFERASE"/>
    <property type="match status" value="1"/>
</dbReference>
<dbReference type="Pfam" id="PF02885">
    <property type="entry name" value="Glycos_trans_3N"/>
    <property type="match status" value="1"/>
</dbReference>
<dbReference type="Pfam" id="PF00591">
    <property type="entry name" value="Glycos_transf_3"/>
    <property type="match status" value="1"/>
</dbReference>
<dbReference type="SUPFAM" id="SSF52418">
    <property type="entry name" value="Nucleoside phosphorylase/phosphoribosyltransferase catalytic domain"/>
    <property type="match status" value="1"/>
</dbReference>
<dbReference type="SUPFAM" id="SSF47648">
    <property type="entry name" value="Nucleoside phosphorylase/phosphoribosyltransferase N-terminal domain"/>
    <property type="match status" value="1"/>
</dbReference>
<evidence type="ECO:0000255" key="1">
    <source>
        <dbReference type="HAMAP-Rule" id="MF_00211"/>
    </source>
</evidence>
<reference key="1">
    <citation type="journal article" date="2007" name="Nat. Biotechnol.">
        <title>Comparative analysis of the complete genome sequence of the plant growth-promoting bacterium Bacillus amyloliquefaciens FZB42.</title>
        <authorList>
            <person name="Chen X.H."/>
            <person name="Koumoutsi A."/>
            <person name="Scholz R."/>
            <person name="Eisenreich A."/>
            <person name="Schneider K."/>
            <person name="Heinemeyer I."/>
            <person name="Morgenstern B."/>
            <person name="Voss B."/>
            <person name="Hess W.R."/>
            <person name="Reva O."/>
            <person name="Junge H."/>
            <person name="Voigt B."/>
            <person name="Jungblut P.R."/>
            <person name="Vater J."/>
            <person name="Suessmuth R."/>
            <person name="Liesegang H."/>
            <person name="Strittmatter A."/>
            <person name="Gottschalk G."/>
            <person name="Borriss R."/>
        </authorList>
    </citation>
    <scope>NUCLEOTIDE SEQUENCE [LARGE SCALE GENOMIC DNA]</scope>
    <source>
        <strain>DSM 23117 / BGSC 10A6 / LMG 26770 / FZB42</strain>
    </source>
</reference>
<proteinExistence type="inferred from homology"/>
<organism>
    <name type="scientific">Bacillus velezensis (strain DSM 23117 / BGSC 10A6 / LMG 26770 / FZB42)</name>
    <name type="common">Bacillus amyloliquefaciens subsp. plantarum</name>
    <dbReference type="NCBI Taxonomy" id="326423"/>
    <lineage>
        <taxon>Bacteria</taxon>
        <taxon>Bacillati</taxon>
        <taxon>Bacillota</taxon>
        <taxon>Bacilli</taxon>
        <taxon>Bacillales</taxon>
        <taxon>Bacillaceae</taxon>
        <taxon>Bacillus</taxon>
        <taxon>Bacillus amyloliquefaciens group</taxon>
    </lineage>
</organism>
<name>TRPD_BACVZ</name>
<protein>
    <recommendedName>
        <fullName evidence="1">Anthranilate phosphoribosyltransferase</fullName>
        <ecNumber evidence="1">2.4.2.18</ecNumber>
    </recommendedName>
</protein>